<gene>
    <name evidence="1" type="primary">hisG</name>
    <name type="ordered locus">Hore_02190</name>
</gene>
<sequence>MKSVITALPKGRLMGEVIDILKQSGFISNNIDINTLSRQLVFHDKKTRNSFLLAKPKDVPVYVEHGAADLGITGKDVLLEHGRNLYEMVDLGVGKCKLVVAVPESKGYKSLADIPEYSRVATSYPEIVKKFFQGKGIQVEVIKLNGSVELAPLVDLADVIVDISSTGTTLKKNNLIPMETIVTSSARLVVNNVSYKIKHKQISELINKINEVVKSGNTEISRK</sequence>
<feature type="chain" id="PRO_1000213270" description="ATP phosphoribosyltransferase">
    <location>
        <begin position="1"/>
        <end position="223"/>
    </location>
</feature>
<dbReference type="EC" id="2.4.2.17" evidence="1"/>
<dbReference type="EMBL" id="CP001098">
    <property type="protein sequence ID" value="ACL68980.1"/>
    <property type="molecule type" value="Genomic_DNA"/>
</dbReference>
<dbReference type="RefSeq" id="WP_012635178.1">
    <property type="nucleotide sequence ID" value="NC_011899.1"/>
</dbReference>
<dbReference type="SMR" id="B8D111"/>
<dbReference type="STRING" id="373903.Hore_02190"/>
<dbReference type="KEGG" id="hor:Hore_02190"/>
<dbReference type="eggNOG" id="COG0040">
    <property type="taxonomic scope" value="Bacteria"/>
</dbReference>
<dbReference type="HOGENOM" id="CLU_038115_2_0_9"/>
<dbReference type="OrthoDB" id="9801867at2"/>
<dbReference type="UniPathway" id="UPA00031">
    <property type="reaction ID" value="UER00006"/>
</dbReference>
<dbReference type="Proteomes" id="UP000000719">
    <property type="component" value="Chromosome"/>
</dbReference>
<dbReference type="GO" id="GO:0005737">
    <property type="term" value="C:cytoplasm"/>
    <property type="evidence" value="ECO:0007669"/>
    <property type="project" value="UniProtKB-SubCell"/>
</dbReference>
<dbReference type="GO" id="GO:0005524">
    <property type="term" value="F:ATP binding"/>
    <property type="evidence" value="ECO:0007669"/>
    <property type="project" value="UniProtKB-KW"/>
</dbReference>
<dbReference type="GO" id="GO:0003879">
    <property type="term" value="F:ATP phosphoribosyltransferase activity"/>
    <property type="evidence" value="ECO:0007669"/>
    <property type="project" value="UniProtKB-UniRule"/>
</dbReference>
<dbReference type="GO" id="GO:0000105">
    <property type="term" value="P:L-histidine biosynthetic process"/>
    <property type="evidence" value="ECO:0007669"/>
    <property type="project" value="UniProtKB-UniRule"/>
</dbReference>
<dbReference type="CDD" id="cd13595">
    <property type="entry name" value="PBP2_HisGs"/>
    <property type="match status" value="1"/>
</dbReference>
<dbReference type="FunFam" id="3.40.190.10:FF:000008">
    <property type="entry name" value="ATP phosphoribosyltransferase"/>
    <property type="match status" value="1"/>
</dbReference>
<dbReference type="Gene3D" id="3.40.190.10">
    <property type="entry name" value="Periplasmic binding protein-like II"/>
    <property type="match status" value="2"/>
</dbReference>
<dbReference type="HAMAP" id="MF_01018">
    <property type="entry name" value="HisG_Short"/>
    <property type="match status" value="1"/>
</dbReference>
<dbReference type="InterPro" id="IPR013820">
    <property type="entry name" value="ATP_PRibTrfase_cat"/>
</dbReference>
<dbReference type="InterPro" id="IPR018198">
    <property type="entry name" value="ATP_PRibTrfase_CS"/>
</dbReference>
<dbReference type="InterPro" id="IPR001348">
    <property type="entry name" value="ATP_PRibTrfase_HisG"/>
</dbReference>
<dbReference type="InterPro" id="IPR024893">
    <property type="entry name" value="ATP_PRibTrfase_HisG_short"/>
</dbReference>
<dbReference type="NCBIfam" id="TIGR00070">
    <property type="entry name" value="hisG"/>
    <property type="match status" value="1"/>
</dbReference>
<dbReference type="PANTHER" id="PTHR21403:SF8">
    <property type="entry name" value="ATP PHOSPHORIBOSYLTRANSFERASE"/>
    <property type="match status" value="1"/>
</dbReference>
<dbReference type="PANTHER" id="PTHR21403">
    <property type="entry name" value="ATP PHOSPHORIBOSYLTRANSFERASE ATP-PRTASE"/>
    <property type="match status" value="1"/>
</dbReference>
<dbReference type="Pfam" id="PF01634">
    <property type="entry name" value="HisG"/>
    <property type="match status" value="1"/>
</dbReference>
<dbReference type="SUPFAM" id="SSF53850">
    <property type="entry name" value="Periplasmic binding protein-like II"/>
    <property type="match status" value="1"/>
</dbReference>
<dbReference type="PROSITE" id="PS01316">
    <property type="entry name" value="ATP_P_PHORIBOSYLTR"/>
    <property type="match status" value="1"/>
</dbReference>
<protein>
    <recommendedName>
        <fullName evidence="1">ATP phosphoribosyltransferase</fullName>
        <shortName evidence="1">ATP-PRT</shortName>
        <shortName evidence="1">ATP-PRTase</shortName>
        <ecNumber evidence="1">2.4.2.17</ecNumber>
    </recommendedName>
</protein>
<keyword id="KW-0028">Amino-acid biosynthesis</keyword>
<keyword id="KW-0067">ATP-binding</keyword>
<keyword id="KW-0963">Cytoplasm</keyword>
<keyword id="KW-0328">Glycosyltransferase</keyword>
<keyword id="KW-0368">Histidine biosynthesis</keyword>
<keyword id="KW-0547">Nucleotide-binding</keyword>
<keyword id="KW-1185">Reference proteome</keyword>
<keyword id="KW-0808">Transferase</keyword>
<organism>
    <name type="scientific">Halothermothrix orenii (strain H 168 / OCM 544 / DSM 9562)</name>
    <dbReference type="NCBI Taxonomy" id="373903"/>
    <lineage>
        <taxon>Bacteria</taxon>
        <taxon>Bacillati</taxon>
        <taxon>Bacillota</taxon>
        <taxon>Clostridia</taxon>
        <taxon>Halanaerobiales</taxon>
        <taxon>Halothermotrichaceae</taxon>
        <taxon>Halothermothrix</taxon>
    </lineage>
</organism>
<evidence type="ECO:0000255" key="1">
    <source>
        <dbReference type="HAMAP-Rule" id="MF_01018"/>
    </source>
</evidence>
<name>HIS1_HALOH</name>
<accession>B8D111</accession>
<comment type="function">
    <text evidence="1">Catalyzes the condensation of ATP and 5-phosphoribose 1-diphosphate to form N'-(5'-phosphoribosyl)-ATP (PR-ATP). Has a crucial role in the pathway because the rate of histidine biosynthesis seems to be controlled primarily by regulation of HisG enzymatic activity.</text>
</comment>
<comment type="catalytic activity">
    <reaction evidence="1">
        <text>1-(5-phospho-beta-D-ribosyl)-ATP + diphosphate = 5-phospho-alpha-D-ribose 1-diphosphate + ATP</text>
        <dbReference type="Rhea" id="RHEA:18473"/>
        <dbReference type="ChEBI" id="CHEBI:30616"/>
        <dbReference type="ChEBI" id="CHEBI:33019"/>
        <dbReference type="ChEBI" id="CHEBI:58017"/>
        <dbReference type="ChEBI" id="CHEBI:73183"/>
        <dbReference type="EC" id="2.4.2.17"/>
    </reaction>
</comment>
<comment type="pathway">
    <text evidence="1">Amino-acid biosynthesis; L-histidine biosynthesis; L-histidine from 5-phospho-alpha-D-ribose 1-diphosphate: step 1/9.</text>
</comment>
<comment type="subunit">
    <text evidence="1">Heteromultimer composed of HisG and HisZ subunits.</text>
</comment>
<comment type="subcellular location">
    <subcellularLocation>
        <location evidence="1">Cytoplasm</location>
    </subcellularLocation>
</comment>
<comment type="domain">
    <text>Lacks the C-terminal regulatory region which is replaced by HisZ.</text>
</comment>
<comment type="similarity">
    <text evidence="1">Belongs to the ATP phosphoribosyltransferase family. Short subfamily.</text>
</comment>
<reference key="1">
    <citation type="journal article" date="2009" name="PLoS ONE">
        <title>Genome analysis of the anaerobic thermohalophilic bacterium Halothermothrix orenii.</title>
        <authorList>
            <person name="Mavromatis K."/>
            <person name="Ivanova N."/>
            <person name="Anderson I."/>
            <person name="Lykidis A."/>
            <person name="Hooper S.D."/>
            <person name="Sun H."/>
            <person name="Kunin V."/>
            <person name="Lapidus A."/>
            <person name="Hugenholtz P."/>
            <person name="Patel B."/>
            <person name="Kyrpides N.C."/>
        </authorList>
    </citation>
    <scope>NUCLEOTIDE SEQUENCE [LARGE SCALE GENOMIC DNA]</scope>
    <source>
        <strain>H 168 / OCM 544 / DSM 9562</strain>
    </source>
</reference>
<proteinExistence type="inferred from homology"/>